<dbReference type="EC" id="2.3.1.-" evidence="5"/>
<dbReference type="EC" id="3.1.1.32" evidence="2"/>
<dbReference type="EC" id="3.1.1.4" evidence="2"/>
<dbReference type="EMBL" id="AB255646">
    <property type="protein sequence ID" value="BAF41148.1"/>
    <property type="molecule type" value="mRNA"/>
</dbReference>
<dbReference type="EMBL" id="AABR07006120">
    <property type="status" value="NOT_ANNOTATED_CDS"/>
    <property type="molecule type" value="Genomic_DNA"/>
</dbReference>
<dbReference type="EMBL" id="BC099084">
    <property type="protein sequence ID" value="AAH99084.1"/>
    <property type="molecule type" value="mRNA"/>
</dbReference>
<dbReference type="RefSeq" id="NP_001034096.1">
    <property type="nucleotide sequence ID" value="NM_001039007.1"/>
</dbReference>
<dbReference type="SMR" id="Q4KLN5"/>
<dbReference type="FunCoup" id="Q4KLN5">
    <property type="interactions" value="2"/>
</dbReference>
<dbReference type="STRING" id="10116.ENSRNOP00000037070"/>
<dbReference type="SwissLipids" id="SLP:000001909"/>
<dbReference type="PaxDb" id="10116-ENSRNOP00000037070"/>
<dbReference type="GeneID" id="293711"/>
<dbReference type="KEGG" id="rno:293711"/>
<dbReference type="UCSC" id="RGD:1308376">
    <property type="organism name" value="rat"/>
</dbReference>
<dbReference type="AGR" id="RGD:1308376"/>
<dbReference type="CTD" id="117245"/>
<dbReference type="RGD" id="1308376">
    <property type="gene designation" value="Plaat5"/>
</dbReference>
<dbReference type="VEuPathDB" id="HostDB:ENSRNOG00000023528"/>
<dbReference type="eggNOG" id="ENOG502S0JN">
    <property type="taxonomic scope" value="Eukaryota"/>
</dbReference>
<dbReference type="HOGENOM" id="CLU_070482_0_0_1"/>
<dbReference type="InParanoid" id="Q4KLN5"/>
<dbReference type="OrthoDB" id="421951at2759"/>
<dbReference type="PhylomeDB" id="Q4KLN5"/>
<dbReference type="TreeFam" id="TF330836"/>
<dbReference type="Reactome" id="R-RNO-1482839">
    <property type="pathway name" value="Acyl chain remodelling of PE"/>
</dbReference>
<dbReference type="PRO" id="PR:Q4KLN5"/>
<dbReference type="Proteomes" id="UP000002494">
    <property type="component" value="Chromosome 1"/>
</dbReference>
<dbReference type="Bgee" id="ENSRNOG00000023528">
    <property type="expression patterns" value="Expressed in testis and 12 other cell types or tissues"/>
</dbReference>
<dbReference type="GO" id="GO:0005737">
    <property type="term" value="C:cytoplasm"/>
    <property type="evidence" value="ECO:0000318"/>
    <property type="project" value="GO_Central"/>
</dbReference>
<dbReference type="GO" id="GO:0005829">
    <property type="term" value="C:cytosol"/>
    <property type="evidence" value="ECO:0007669"/>
    <property type="project" value="UniProtKB-SubCell"/>
</dbReference>
<dbReference type="GO" id="GO:0016410">
    <property type="term" value="F:N-acyltransferase activity"/>
    <property type="evidence" value="ECO:0000314"/>
    <property type="project" value="MGI"/>
</dbReference>
<dbReference type="GO" id="GO:0008970">
    <property type="term" value="F:phospholipase A1 activity"/>
    <property type="evidence" value="ECO:0000266"/>
    <property type="project" value="RGD"/>
</dbReference>
<dbReference type="GO" id="GO:0004623">
    <property type="term" value="F:phospholipase A2 activity"/>
    <property type="evidence" value="ECO:0000266"/>
    <property type="project" value="RGD"/>
</dbReference>
<dbReference type="GO" id="GO:0070292">
    <property type="term" value="P:N-acylphosphatidylethanolamine metabolic process"/>
    <property type="evidence" value="ECO:0000314"/>
    <property type="project" value="MGI"/>
</dbReference>
<dbReference type="FunFam" id="3.90.1720.10:FF:000002">
    <property type="entry name" value="HRAS like suppressor 2"/>
    <property type="match status" value="1"/>
</dbReference>
<dbReference type="Gene3D" id="3.90.1720.10">
    <property type="entry name" value="endopeptidase domain like (from Nostoc punctiforme)"/>
    <property type="match status" value="1"/>
</dbReference>
<dbReference type="InterPro" id="IPR051496">
    <property type="entry name" value="H-rev107_PLA/AT"/>
</dbReference>
<dbReference type="InterPro" id="IPR007053">
    <property type="entry name" value="LRAT_dom"/>
</dbReference>
<dbReference type="PANTHER" id="PTHR13943">
    <property type="entry name" value="HRAS-LIKE SUPPRESSOR - RELATED"/>
    <property type="match status" value="1"/>
</dbReference>
<dbReference type="PANTHER" id="PTHR13943:SF2">
    <property type="entry name" value="PHOSPHOLIPASE A AND ACYLTRANSFERASE 5"/>
    <property type="match status" value="1"/>
</dbReference>
<dbReference type="Pfam" id="PF04970">
    <property type="entry name" value="LRAT"/>
    <property type="match status" value="1"/>
</dbReference>
<dbReference type="PROSITE" id="PS51934">
    <property type="entry name" value="LRAT"/>
    <property type="match status" value="1"/>
</dbReference>
<feature type="chain" id="PRO_0000450339" description="Phospholipase A and acyltransferase 5">
    <location>
        <begin position="1"/>
        <end position="287"/>
    </location>
</feature>
<feature type="domain" description="LRAT" evidence="3">
    <location>
        <begin position="144"/>
        <end position="257"/>
    </location>
</feature>
<feature type="region of interest" description="Disordered" evidence="4">
    <location>
        <begin position="48"/>
        <end position="72"/>
    </location>
</feature>
<feature type="region of interest" description="Disordered" evidence="4">
    <location>
        <begin position="86"/>
        <end position="138"/>
    </location>
</feature>
<feature type="compositionally biased region" description="Polar residues" evidence="4">
    <location>
        <begin position="49"/>
        <end position="72"/>
    </location>
</feature>
<feature type="compositionally biased region" description="Polar residues" evidence="4">
    <location>
        <begin position="128"/>
        <end position="138"/>
    </location>
</feature>
<feature type="active site" evidence="3">
    <location>
        <position position="154"/>
    </location>
</feature>
<feature type="active site" evidence="3">
    <location>
        <position position="166"/>
    </location>
</feature>
<feature type="active site" description="Acyl-thioester intermediate" evidence="3">
    <location>
        <position position="241"/>
    </location>
</feature>
<protein>
    <recommendedName>
        <fullName evidence="7">Phospholipase A and acyltransferase 5</fullName>
    </recommendedName>
    <alternativeName>
        <fullName>Ca(2+)-independent N-acyltransferase</fullName>
        <shortName>iNAT</shortName>
        <ecNumber evidence="5">2.3.1.-</ecNumber>
        <ecNumber evidence="2">3.1.1.32</ecNumber>
        <ecNumber evidence="2">3.1.1.4</ecNumber>
    </alternativeName>
    <alternativeName>
        <fullName>H-rev107-like protein 5</fullName>
    </alternativeName>
    <alternativeName>
        <fullName>HRAS-like suppressor 5</fullName>
        <shortName>HRSL5</shortName>
    </alternativeName>
    <alternativeName>
        <fullName evidence="6">Rat LRAT-like protein-1</fullName>
        <shortName evidence="6">RLP-1</shortName>
    </alternativeName>
</protein>
<evidence type="ECO:0000250" key="1">
    <source>
        <dbReference type="UniProtKB" id="Q96KN8"/>
    </source>
</evidence>
<evidence type="ECO:0000250" key="2">
    <source>
        <dbReference type="UniProtKB" id="Q9CPX5"/>
    </source>
</evidence>
<evidence type="ECO:0000255" key="3">
    <source>
        <dbReference type="PROSITE-ProRule" id="PRU01283"/>
    </source>
</evidence>
<evidence type="ECO:0000256" key="4">
    <source>
        <dbReference type="SAM" id="MobiDB-lite"/>
    </source>
</evidence>
<evidence type="ECO:0000269" key="5">
    <source>
    </source>
</evidence>
<evidence type="ECO:0000303" key="6">
    <source>
    </source>
</evidence>
<evidence type="ECO:0000305" key="7"/>
<evidence type="ECO:0000305" key="8">
    <source>
    </source>
</evidence>
<evidence type="ECO:0000312" key="9">
    <source>
        <dbReference type="EMBL" id="AAH99084.1"/>
    </source>
</evidence>
<evidence type="ECO:0000312" key="10">
    <source>
        <dbReference type="EMBL" id="BAF41148.1"/>
    </source>
</evidence>
<evidence type="ECO:0000312" key="11">
    <source>
        <dbReference type="RGD" id="1308376"/>
    </source>
</evidence>
<keyword id="KW-0012">Acyltransferase</keyword>
<keyword id="KW-0963">Cytoplasm</keyword>
<keyword id="KW-0378">Hydrolase</keyword>
<keyword id="KW-0443">Lipid metabolism</keyword>
<keyword id="KW-1185">Reference proteome</keyword>
<keyword id="KW-0808">Transferase</keyword>
<comment type="function">
    <text evidence="1 2 5">Exhibits both phospholipase A1/2 and acyltransferase activities (By similarity). Shows phospholipase A1 (PLA1) and A2 (PLA2) activity, catalyzing the calcium-independent release of fatty acids from the sn-1 or sn-2 position of glycerophospholipids (By similarity). Shows N-acyltransferase activity, catalyzing the calcium-independent transfer of a fatty acyl group at the sn-1 position of phosphatidylcholine (PC) and other glycerophospholipids to the primary amine of phosphatidylethanolamine (PE), forming N-acylphosphatidylethanolamine (NAPE), which serves as precursor for N-acylethanolamines (NAEs) (PubMed:17158102).</text>
</comment>
<comment type="catalytic activity">
    <reaction evidence="2">
        <text>a 1,2-diacyl-sn-glycero-3-phosphocholine + H2O = a 1-acyl-sn-glycero-3-phosphocholine + a fatty acid + H(+)</text>
        <dbReference type="Rhea" id="RHEA:15801"/>
        <dbReference type="ChEBI" id="CHEBI:15377"/>
        <dbReference type="ChEBI" id="CHEBI:15378"/>
        <dbReference type="ChEBI" id="CHEBI:28868"/>
        <dbReference type="ChEBI" id="CHEBI:57643"/>
        <dbReference type="ChEBI" id="CHEBI:58168"/>
        <dbReference type="EC" id="3.1.1.4"/>
    </reaction>
</comment>
<comment type="catalytic activity">
    <reaction evidence="2">
        <text>a 1,2-diacyl-sn-glycero-3-phosphocholine + H2O = a 2-acyl-sn-glycero-3-phosphocholine + a fatty acid + H(+)</text>
        <dbReference type="Rhea" id="RHEA:18689"/>
        <dbReference type="ChEBI" id="CHEBI:15377"/>
        <dbReference type="ChEBI" id="CHEBI:15378"/>
        <dbReference type="ChEBI" id="CHEBI:28868"/>
        <dbReference type="ChEBI" id="CHEBI:57643"/>
        <dbReference type="ChEBI" id="CHEBI:57875"/>
        <dbReference type="EC" id="3.1.1.32"/>
    </reaction>
</comment>
<comment type="catalytic activity">
    <reaction evidence="5">
        <text>1-hexadecanoyl-2-(5Z,8Z,11Z,14Z-eicosatetraenoyl)-sn-glycero-3-phosphocholine + 1,2-di-(9Z-octadecenoyl)-sn-glycero-3-phosphoethanolamine = N-(5Z,8Z,11Z,14Z-eicosatetraenoyl)-1,2-di-(9Z-octadecenoyl)-sn-glycero-3-phosphoethanolamine + 1-hexadecanoyl-sn-glycero-3-phosphocholine + H(+)</text>
        <dbReference type="Rhea" id="RHEA:45476"/>
        <dbReference type="ChEBI" id="CHEBI:15378"/>
        <dbReference type="ChEBI" id="CHEBI:72998"/>
        <dbReference type="ChEBI" id="CHEBI:73003"/>
        <dbReference type="ChEBI" id="CHEBI:74986"/>
        <dbReference type="ChEBI" id="CHEBI:85277"/>
    </reaction>
    <physiologicalReaction direction="left-to-right" evidence="8">
        <dbReference type="Rhea" id="RHEA:45477"/>
    </physiologicalReaction>
</comment>
<comment type="catalytic activity">
    <reaction evidence="5">
        <text>1,2-di-(9Z-octadecenoyl)-sn-glycero-3-phosphoethanolamine + 1,2-dihexadecanoyl-sn-glycero-3-phosphocholine = N-hexadecanoyl-1,2-di-(9Z-octadecenoyl)-sn-glycero-3-phosphoethanolamine + 1-hexadecanoyl-sn-glycero-3-phosphocholine + H(+)</text>
        <dbReference type="Rhea" id="RHEA:45176"/>
        <dbReference type="ChEBI" id="CHEBI:15378"/>
        <dbReference type="ChEBI" id="CHEBI:72998"/>
        <dbReference type="ChEBI" id="CHEBI:72999"/>
        <dbReference type="ChEBI" id="CHEBI:74986"/>
        <dbReference type="ChEBI" id="CHEBI:78097"/>
    </reaction>
    <physiologicalReaction direction="left-to-right" evidence="8">
        <dbReference type="Rhea" id="RHEA:45177"/>
    </physiologicalReaction>
</comment>
<comment type="catalytic activity">
    <reaction evidence="5">
        <text>1,2-di-(9Z-octadecenoyl)-sn-glycero-3-phosphoethanolamine + 1,2-dihexadecanoyl-sn-glycero-3-phosphocholine = N-hexadecanoyl-1,2-di-(9Z-octadecenoyl)-sn-glycero-3-phosphoethanolamine + 2-hexadecanoyl-sn-glycero-3-phosphocholine + H(+)</text>
        <dbReference type="Rhea" id="RHEA:45172"/>
        <dbReference type="ChEBI" id="CHEBI:15378"/>
        <dbReference type="ChEBI" id="CHEBI:72999"/>
        <dbReference type="ChEBI" id="CHEBI:74986"/>
        <dbReference type="ChEBI" id="CHEBI:76078"/>
        <dbReference type="ChEBI" id="CHEBI:78097"/>
    </reaction>
    <physiologicalReaction direction="left-to-right" evidence="8">
        <dbReference type="Rhea" id="RHEA:45173"/>
    </physiologicalReaction>
</comment>
<comment type="catalytic activity">
    <reaction evidence="2">
        <text>a 1,2-diacyl-sn-glycero-3-phosphoethanolamine + a 1,2-diacyl-sn-glycero-3-phosphocholine = an N-acyl-1,2-diacyl-sn-glycero-3-phosphoethanolamine + a 1-acyl-sn-glycero-3-phosphocholine + H(+)</text>
        <dbReference type="Rhea" id="RHEA:45192"/>
        <dbReference type="ChEBI" id="CHEBI:15378"/>
        <dbReference type="ChEBI" id="CHEBI:57643"/>
        <dbReference type="ChEBI" id="CHEBI:58168"/>
        <dbReference type="ChEBI" id="CHEBI:62537"/>
        <dbReference type="ChEBI" id="CHEBI:64612"/>
    </reaction>
    <physiologicalReaction direction="left-to-right" evidence="2">
        <dbReference type="Rhea" id="RHEA:45193"/>
    </physiologicalReaction>
</comment>
<comment type="catalytic activity">
    <reaction evidence="2">
        <text>a 1,2-diacyl-sn-glycero-3-phosphoethanolamine + a 1,2-diacyl-sn-glycero-3-phosphocholine = an N-acyl-1,2-diacyl-sn-glycero-3-phosphoethanolamine + a 2-acyl-sn-glycero-3-phosphocholine + H(+)</text>
        <dbReference type="Rhea" id="RHEA:45188"/>
        <dbReference type="ChEBI" id="CHEBI:15378"/>
        <dbReference type="ChEBI" id="CHEBI:57643"/>
        <dbReference type="ChEBI" id="CHEBI:57875"/>
        <dbReference type="ChEBI" id="CHEBI:62537"/>
        <dbReference type="ChEBI" id="CHEBI:64612"/>
    </reaction>
    <physiologicalReaction direction="left-to-right" evidence="2">
        <dbReference type="Rhea" id="RHEA:45189"/>
    </physiologicalReaction>
</comment>
<comment type="catalytic activity">
    <reaction evidence="5">
        <text>1-hexadecanoyl-2-(9Z-octadecenoyl)-sn-glycero-3-phosphocholine + 1,2-di-(9Z-octadecenoyl)-sn-glycero-3-phosphoethanolamine = N,1,2-tri-(9Z-octadecenoyl)-sn-glycero-3-phosphoethanolamine + 1-hexadecanoyl-sn-glycero-3-phosphocholine + H(+)</text>
        <dbReference type="Rhea" id="RHEA:56504"/>
        <dbReference type="ChEBI" id="CHEBI:15378"/>
        <dbReference type="ChEBI" id="CHEBI:72998"/>
        <dbReference type="ChEBI" id="CHEBI:73001"/>
        <dbReference type="ChEBI" id="CHEBI:74986"/>
        <dbReference type="ChEBI" id="CHEBI:85291"/>
    </reaction>
    <physiologicalReaction direction="left-to-right" evidence="8">
        <dbReference type="Rhea" id="RHEA:56505"/>
    </physiologicalReaction>
</comment>
<comment type="biophysicochemical properties">
    <phDependence>
        <text evidence="5">Optimum pH is 9.0.</text>
    </phDependence>
</comment>
<comment type="subcellular location">
    <subcellularLocation>
        <location evidence="5">Cytoplasm</location>
        <location evidence="5">Cytosol</location>
    </subcellularLocation>
</comment>
<comment type="tissue specificity">
    <text evidence="5">Expressed in testis.</text>
</comment>
<comment type="similarity">
    <text evidence="7">Belongs to the H-rev107 family.</text>
</comment>
<accession>Q4KLN5</accession>
<sequence>MIPGHRGPWSAPLCRRLVPAGHSGMGLSPAASGEYGIRLFRVPWPSRPKQISRTASTESSDTQPTNDSASSQALVVQFLPKLPKQDRGLEQARSLRQGQKPEINLELIPSKKRTEMIPSSDSEIEGNLKNQAAESNQKPRPGDLIEIFRIGYEHWAIYVEDDCVVHLAPPSEFEAGSITSIFSNRAVVKYSRLQDVLHGCSWKINNKLDGTYLPLPVDKIIQRTKNMINKIVQYSLIEGNCEHFVNDLRYGVPRSQQVEHVLVEGAKAAGAVLSAVVDSIRPKPITA</sequence>
<reference evidence="10" key="1">
    <citation type="journal article" date="2007" name="J. Biol. Chem.">
        <title>Discovery and characterization of a Ca2+-independent phosphatidylethanolamine N-acyltransferase generating the anandamide precursor and its congeners.</title>
        <authorList>
            <person name="Jin X.H."/>
            <person name="Okamoto Y."/>
            <person name="Morishita J."/>
            <person name="Tsuboi K."/>
            <person name="Tonai T."/>
            <person name="Ueda N."/>
        </authorList>
    </citation>
    <scope>NUCLEOTIDE SEQUENCE [MRNA]</scope>
    <scope>TISSUE SPECIFICITY</scope>
    <scope>SUBCELLULAR LOCATION</scope>
    <scope>CATALYTIC ACTIVITY</scope>
    <scope>FUNCTION</scope>
    <scope>BIOPHYSICOCHEMICAL PROPERTIES</scope>
</reference>
<reference key="2">
    <citation type="journal article" date="2004" name="Nature">
        <title>Genome sequence of the Brown Norway rat yields insights into mammalian evolution.</title>
        <authorList>
            <person name="Gibbs R.A."/>
            <person name="Weinstock G.M."/>
            <person name="Metzker M.L."/>
            <person name="Muzny D.M."/>
            <person name="Sodergren E.J."/>
            <person name="Scherer S."/>
            <person name="Scott G."/>
            <person name="Steffen D."/>
            <person name="Worley K.C."/>
            <person name="Burch P.E."/>
            <person name="Okwuonu G."/>
            <person name="Hines S."/>
            <person name="Lewis L."/>
            <person name="Deramo C."/>
            <person name="Delgado O."/>
            <person name="Dugan-Rocha S."/>
            <person name="Miner G."/>
            <person name="Morgan M."/>
            <person name="Hawes A."/>
            <person name="Gill R."/>
            <person name="Holt R.A."/>
            <person name="Adams M.D."/>
            <person name="Amanatides P.G."/>
            <person name="Baden-Tillson H."/>
            <person name="Barnstead M."/>
            <person name="Chin S."/>
            <person name="Evans C.A."/>
            <person name="Ferriera S."/>
            <person name="Fosler C."/>
            <person name="Glodek A."/>
            <person name="Gu Z."/>
            <person name="Jennings D."/>
            <person name="Kraft C.L."/>
            <person name="Nguyen T."/>
            <person name="Pfannkoch C.M."/>
            <person name="Sitter C."/>
            <person name="Sutton G.G."/>
            <person name="Venter J.C."/>
            <person name="Woodage T."/>
            <person name="Smith D."/>
            <person name="Lee H.-M."/>
            <person name="Gustafson E."/>
            <person name="Cahill P."/>
            <person name="Kana A."/>
            <person name="Doucette-Stamm L."/>
            <person name="Weinstock K."/>
            <person name="Fechtel K."/>
            <person name="Weiss R.B."/>
            <person name="Dunn D.M."/>
            <person name="Green E.D."/>
            <person name="Blakesley R.W."/>
            <person name="Bouffard G.G."/>
            <person name="De Jong P.J."/>
            <person name="Osoegawa K."/>
            <person name="Zhu B."/>
            <person name="Marra M."/>
            <person name="Schein J."/>
            <person name="Bosdet I."/>
            <person name="Fjell C."/>
            <person name="Jones S."/>
            <person name="Krzywinski M."/>
            <person name="Mathewson C."/>
            <person name="Siddiqui A."/>
            <person name="Wye N."/>
            <person name="McPherson J."/>
            <person name="Zhao S."/>
            <person name="Fraser C.M."/>
            <person name="Shetty J."/>
            <person name="Shatsman S."/>
            <person name="Geer K."/>
            <person name="Chen Y."/>
            <person name="Abramzon S."/>
            <person name="Nierman W.C."/>
            <person name="Havlak P.H."/>
            <person name="Chen R."/>
            <person name="Durbin K.J."/>
            <person name="Egan A."/>
            <person name="Ren Y."/>
            <person name="Song X.-Z."/>
            <person name="Li B."/>
            <person name="Liu Y."/>
            <person name="Qin X."/>
            <person name="Cawley S."/>
            <person name="Cooney A.J."/>
            <person name="D'Souza L.M."/>
            <person name="Martin K."/>
            <person name="Wu J.Q."/>
            <person name="Gonzalez-Garay M.L."/>
            <person name="Jackson A.R."/>
            <person name="Kalafus K.J."/>
            <person name="McLeod M.P."/>
            <person name="Milosavljevic A."/>
            <person name="Virk D."/>
            <person name="Volkov A."/>
            <person name="Wheeler D.A."/>
            <person name="Zhang Z."/>
            <person name="Bailey J.A."/>
            <person name="Eichler E.E."/>
            <person name="Tuzun E."/>
            <person name="Birney E."/>
            <person name="Mongin E."/>
            <person name="Ureta-Vidal A."/>
            <person name="Woodwark C."/>
            <person name="Zdobnov E."/>
            <person name="Bork P."/>
            <person name="Suyama M."/>
            <person name="Torrents D."/>
            <person name="Alexandersson M."/>
            <person name="Trask B.J."/>
            <person name="Young J.M."/>
            <person name="Huang H."/>
            <person name="Wang H."/>
            <person name="Xing H."/>
            <person name="Daniels S."/>
            <person name="Gietzen D."/>
            <person name="Schmidt J."/>
            <person name="Stevens K."/>
            <person name="Vitt U."/>
            <person name="Wingrove J."/>
            <person name="Camara F."/>
            <person name="Mar Alba M."/>
            <person name="Abril J.F."/>
            <person name="Guigo R."/>
            <person name="Smit A."/>
            <person name="Dubchak I."/>
            <person name="Rubin E.M."/>
            <person name="Couronne O."/>
            <person name="Poliakov A."/>
            <person name="Huebner N."/>
            <person name="Ganten D."/>
            <person name="Goesele C."/>
            <person name="Hummel O."/>
            <person name="Kreitler T."/>
            <person name="Lee Y.-A."/>
            <person name="Monti J."/>
            <person name="Schulz H."/>
            <person name="Zimdahl H."/>
            <person name="Himmelbauer H."/>
            <person name="Lehrach H."/>
            <person name="Jacob H.J."/>
            <person name="Bromberg S."/>
            <person name="Gullings-Handley J."/>
            <person name="Jensen-Seaman M.I."/>
            <person name="Kwitek A.E."/>
            <person name="Lazar J."/>
            <person name="Pasko D."/>
            <person name="Tonellato P.J."/>
            <person name="Twigger S."/>
            <person name="Ponting C.P."/>
            <person name="Duarte J.M."/>
            <person name="Rice S."/>
            <person name="Goodstadt L."/>
            <person name="Beatson S.A."/>
            <person name="Emes R.D."/>
            <person name="Winter E.E."/>
            <person name="Webber C."/>
            <person name="Brandt P."/>
            <person name="Nyakatura G."/>
            <person name="Adetobi M."/>
            <person name="Chiaromonte F."/>
            <person name="Elnitski L."/>
            <person name="Eswara P."/>
            <person name="Hardison R.C."/>
            <person name="Hou M."/>
            <person name="Kolbe D."/>
            <person name="Makova K."/>
            <person name="Miller W."/>
            <person name="Nekrutenko A."/>
            <person name="Riemer C."/>
            <person name="Schwartz S."/>
            <person name="Taylor J."/>
            <person name="Yang S."/>
            <person name="Zhang Y."/>
            <person name="Lindpaintner K."/>
            <person name="Andrews T.D."/>
            <person name="Caccamo M."/>
            <person name="Clamp M."/>
            <person name="Clarke L."/>
            <person name="Curwen V."/>
            <person name="Durbin R.M."/>
            <person name="Eyras E."/>
            <person name="Searle S.M."/>
            <person name="Cooper G.M."/>
            <person name="Batzoglou S."/>
            <person name="Brudno M."/>
            <person name="Sidow A."/>
            <person name="Stone E.A."/>
            <person name="Payseur B.A."/>
            <person name="Bourque G."/>
            <person name="Lopez-Otin C."/>
            <person name="Puente X.S."/>
            <person name="Chakrabarti K."/>
            <person name="Chatterji S."/>
            <person name="Dewey C."/>
            <person name="Pachter L."/>
            <person name="Bray N."/>
            <person name="Yap V.B."/>
            <person name="Caspi A."/>
            <person name="Tesler G."/>
            <person name="Pevzner P.A."/>
            <person name="Haussler D."/>
            <person name="Roskin K.M."/>
            <person name="Baertsch R."/>
            <person name="Clawson H."/>
            <person name="Furey T.S."/>
            <person name="Hinrichs A.S."/>
            <person name="Karolchik D."/>
            <person name="Kent W.J."/>
            <person name="Rosenbloom K.R."/>
            <person name="Trumbower H."/>
            <person name="Weirauch M."/>
            <person name="Cooper D.N."/>
            <person name="Stenson P.D."/>
            <person name="Ma B."/>
            <person name="Brent M."/>
            <person name="Arumugam M."/>
            <person name="Shteynberg D."/>
            <person name="Copley R.R."/>
            <person name="Taylor M.S."/>
            <person name="Riethman H."/>
            <person name="Mudunuri U."/>
            <person name="Peterson J."/>
            <person name="Guyer M."/>
            <person name="Felsenfeld A."/>
            <person name="Old S."/>
            <person name="Mockrin S."/>
            <person name="Collins F.S."/>
        </authorList>
    </citation>
    <scope>NUCLEOTIDE SEQUENCE [LARGE SCALE GENOMIC DNA]</scope>
    <source>
        <strain>Brown Norway</strain>
    </source>
</reference>
<reference evidence="9" key="3">
    <citation type="journal article" date="2004" name="Genome Res.">
        <title>The status, quality, and expansion of the NIH full-length cDNA project: the Mammalian Gene Collection (MGC).</title>
        <authorList>
            <consortium name="The MGC Project Team"/>
        </authorList>
    </citation>
    <scope>NUCLEOTIDE SEQUENCE [LARGE SCALE MRNA]</scope>
    <source>
        <tissue evidence="9">Testis</tissue>
    </source>
</reference>
<proteinExistence type="evidence at protein level"/>
<name>PLAT5_RAT</name>
<organism evidence="9">
    <name type="scientific">Rattus norvegicus</name>
    <name type="common">Rat</name>
    <dbReference type="NCBI Taxonomy" id="10116"/>
    <lineage>
        <taxon>Eukaryota</taxon>
        <taxon>Metazoa</taxon>
        <taxon>Chordata</taxon>
        <taxon>Craniata</taxon>
        <taxon>Vertebrata</taxon>
        <taxon>Euteleostomi</taxon>
        <taxon>Mammalia</taxon>
        <taxon>Eutheria</taxon>
        <taxon>Euarchontoglires</taxon>
        <taxon>Glires</taxon>
        <taxon>Rodentia</taxon>
        <taxon>Myomorpha</taxon>
        <taxon>Muroidea</taxon>
        <taxon>Muridae</taxon>
        <taxon>Murinae</taxon>
        <taxon>Rattus</taxon>
    </lineage>
</organism>
<gene>
    <name evidence="11" type="primary">Plaat5</name>
    <name evidence="9 11" type="synonym">Hrasls5</name>
    <name type="synonym">Hrlp5</name>
    <name evidence="6" type="synonym">Rlp-1</name>
</gene>